<name>SYS_ACAM1</name>
<comment type="function">
    <text evidence="1">Catalyzes the attachment of serine to tRNA(Ser). Is also able to aminoacylate tRNA(Sec) with serine, to form the misacylated tRNA L-seryl-tRNA(Sec), which will be further converted into selenocysteinyl-tRNA(Sec).</text>
</comment>
<comment type="catalytic activity">
    <reaction evidence="1">
        <text>tRNA(Ser) + L-serine + ATP = L-seryl-tRNA(Ser) + AMP + diphosphate + H(+)</text>
        <dbReference type="Rhea" id="RHEA:12292"/>
        <dbReference type="Rhea" id="RHEA-COMP:9669"/>
        <dbReference type="Rhea" id="RHEA-COMP:9703"/>
        <dbReference type="ChEBI" id="CHEBI:15378"/>
        <dbReference type="ChEBI" id="CHEBI:30616"/>
        <dbReference type="ChEBI" id="CHEBI:33019"/>
        <dbReference type="ChEBI" id="CHEBI:33384"/>
        <dbReference type="ChEBI" id="CHEBI:78442"/>
        <dbReference type="ChEBI" id="CHEBI:78533"/>
        <dbReference type="ChEBI" id="CHEBI:456215"/>
        <dbReference type="EC" id="6.1.1.11"/>
    </reaction>
</comment>
<comment type="catalytic activity">
    <reaction evidence="1">
        <text>tRNA(Sec) + L-serine + ATP = L-seryl-tRNA(Sec) + AMP + diphosphate + H(+)</text>
        <dbReference type="Rhea" id="RHEA:42580"/>
        <dbReference type="Rhea" id="RHEA-COMP:9742"/>
        <dbReference type="Rhea" id="RHEA-COMP:10128"/>
        <dbReference type="ChEBI" id="CHEBI:15378"/>
        <dbReference type="ChEBI" id="CHEBI:30616"/>
        <dbReference type="ChEBI" id="CHEBI:33019"/>
        <dbReference type="ChEBI" id="CHEBI:33384"/>
        <dbReference type="ChEBI" id="CHEBI:78442"/>
        <dbReference type="ChEBI" id="CHEBI:78533"/>
        <dbReference type="ChEBI" id="CHEBI:456215"/>
        <dbReference type="EC" id="6.1.1.11"/>
    </reaction>
</comment>
<comment type="pathway">
    <text evidence="1">Aminoacyl-tRNA biosynthesis; selenocysteinyl-tRNA(Sec) biosynthesis; L-seryl-tRNA(Sec) from L-serine and tRNA(Sec): step 1/1.</text>
</comment>
<comment type="subunit">
    <text evidence="1">Homodimer. The tRNA molecule binds across the dimer.</text>
</comment>
<comment type="subcellular location">
    <subcellularLocation>
        <location evidence="1">Cytoplasm</location>
    </subcellularLocation>
</comment>
<comment type="domain">
    <text evidence="1">Consists of two distinct domains, a catalytic core and a N-terminal extension that is involved in tRNA binding.</text>
</comment>
<comment type="similarity">
    <text evidence="1">Belongs to the class-II aminoacyl-tRNA synthetase family. Type-1 seryl-tRNA synthetase subfamily.</text>
</comment>
<evidence type="ECO:0000255" key="1">
    <source>
        <dbReference type="HAMAP-Rule" id="MF_00176"/>
    </source>
</evidence>
<sequence>MIDLKQLRENPEAFAECLSRRGDYDLQAILDLDQKQRELETERSQLQARSNQIGKTIGERMKGGANPKDPEIQNLRQEGSTVKATLSDLEPKERDLKAEIGELLLTIPNLPSDDTPVGKDETANVEVSRWGDEYIPKNAKLAHWEIGENLGILNFERSVKVAQSRFATLVGAGAALERALIQFMLDQQVEAGYVEVLPPVLVNSDSLTATGQLPKFAEESFKCAEDDLWLSPTAEVPVTNLYRDEIINADDLPIFHCAYTPCFRREAGSYGRDTRGLIRLHQFNKVELVKLVHPSTSAAEHEALVKNAAAILEALKLPYRVLQLCTGDLGFSAAKCYDLEVWLPSADCYREISSCSNFLDFQARRGNIRFKESGQKGTQFVHTLNGSGLAVGRTMAAVLENYQQPDGSVQVPDVLQPYLKRKVL</sequence>
<reference key="1">
    <citation type="journal article" date="2008" name="Proc. Natl. Acad. Sci. U.S.A.">
        <title>Niche adaptation and genome expansion in the chlorophyll d-producing cyanobacterium Acaryochloris marina.</title>
        <authorList>
            <person name="Swingley W.D."/>
            <person name="Chen M."/>
            <person name="Cheung P.C."/>
            <person name="Conrad A.L."/>
            <person name="Dejesa L.C."/>
            <person name="Hao J."/>
            <person name="Honchak B.M."/>
            <person name="Karbach L.E."/>
            <person name="Kurdoglu A."/>
            <person name="Lahiri S."/>
            <person name="Mastrian S.D."/>
            <person name="Miyashita H."/>
            <person name="Page L."/>
            <person name="Ramakrishna P."/>
            <person name="Satoh S."/>
            <person name="Sattley W.M."/>
            <person name="Shimada Y."/>
            <person name="Taylor H.L."/>
            <person name="Tomo T."/>
            <person name="Tsuchiya T."/>
            <person name="Wang Z.T."/>
            <person name="Raymond J."/>
            <person name="Mimuro M."/>
            <person name="Blankenship R.E."/>
            <person name="Touchman J.W."/>
        </authorList>
    </citation>
    <scope>NUCLEOTIDE SEQUENCE [LARGE SCALE GENOMIC DNA]</scope>
    <source>
        <strain>MBIC 11017</strain>
    </source>
</reference>
<proteinExistence type="inferred from homology"/>
<protein>
    <recommendedName>
        <fullName evidence="1">Serine--tRNA ligase</fullName>
        <ecNumber evidence="1">6.1.1.11</ecNumber>
    </recommendedName>
    <alternativeName>
        <fullName evidence="1">Seryl-tRNA synthetase</fullName>
        <shortName evidence="1">SerRS</shortName>
    </alternativeName>
    <alternativeName>
        <fullName evidence="1">Seryl-tRNA(Ser/Sec) synthetase</fullName>
    </alternativeName>
</protein>
<dbReference type="EC" id="6.1.1.11" evidence="1"/>
<dbReference type="EMBL" id="CP000828">
    <property type="protein sequence ID" value="ABW27084.1"/>
    <property type="molecule type" value="Genomic_DNA"/>
</dbReference>
<dbReference type="RefSeq" id="WP_012162574.1">
    <property type="nucleotide sequence ID" value="NC_009925.1"/>
</dbReference>
<dbReference type="SMR" id="B0BYR8"/>
<dbReference type="STRING" id="329726.AM1_2069"/>
<dbReference type="KEGG" id="amr:AM1_2069"/>
<dbReference type="eggNOG" id="COG0172">
    <property type="taxonomic scope" value="Bacteria"/>
</dbReference>
<dbReference type="HOGENOM" id="CLU_023797_1_1_3"/>
<dbReference type="OrthoDB" id="9804647at2"/>
<dbReference type="UniPathway" id="UPA00906">
    <property type="reaction ID" value="UER00895"/>
</dbReference>
<dbReference type="Proteomes" id="UP000000268">
    <property type="component" value="Chromosome"/>
</dbReference>
<dbReference type="GO" id="GO:0005737">
    <property type="term" value="C:cytoplasm"/>
    <property type="evidence" value="ECO:0007669"/>
    <property type="project" value="UniProtKB-SubCell"/>
</dbReference>
<dbReference type="GO" id="GO:0005524">
    <property type="term" value="F:ATP binding"/>
    <property type="evidence" value="ECO:0007669"/>
    <property type="project" value="UniProtKB-UniRule"/>
</dbReference>
<dbReference type="GO" id="GO:0004828">
    <property type="term" value="F:serine-tRNA ligase activity"/>
    <property type="evidence" value="ECO:0007669"/>
    <property type="project" value="UniProtKB-UniRule"/>
</dbReference>
<dbReference type="GO" id="GO:0016260">
    <property type="term" value="P:selenocysteine biosynthetic process"/>
    <property type="evidence" value="ECO:0007669"/>
    <property type="project" value="UniProtKB-UniRule"/>
</dbReference>
<dbReference type="GO" id="GO:0006434">
    <property type="term" value="P:seryl-tRNA aminoacylation"/>
    <property type="evidence" value="ECO:0007669"/>
    <property type="project" value="UniProtKB-UniRule"/>
</dbReference>
<dbReference type="CDD" id="cd00770">
    <property type="entry name" value="SerRS_core"/>
    <property type="match status" value="1"/>
</dbReference>
<dbReference type="Gene3D" id="3.30.930.10">
    <property type="entry name" value="Bira Bifunctional Protein, Domain 2"/>
    <property type="match status" value="1"/>
</dbReference>
<dbReference type="Gene3D" id="1.10.287.40">
    <property type="entry name" value="Serine-tRNA synthetase, tRNA binding domain"/>
    <property type="match status" value="1"/>
</dbReference>
<dbReference type="HAMAP" id="MF_00176">
    <property type="entry name" value="Ser_tRNA_synth_type1"/>
    <property type="match status" value="1"/>
</dbReference>
<dbReference type="InterPro" id="IPR002314">
    <property type="entry name" value="aa-tRNA-synt_IIb"/>
</dbReference>
<dbReference type="InterPro" id="IPR006195">
    <property type="entry name" value="aa-tRNA-synth_II"/>
</dbReference>
<dbReference type="InterPro" id="IPR045864">
    <property type="entry name" value="aa-tRNA-synth_II/BPL/LPL"/>
</dbReference>
<dbReference type="InterPro" id="IPR002317">
    <property type="entry name" value="Ser-tRNA-ligase_type_1"/>
</dbReference>
<dbReference type="InterPro" id="IPR015866">
    <property type="entry name" value="Ser-tRNA-synth_1_N"/>
</dbReference>
<dbReference type="InterPro" id="IPR042103">
    <property type="entry name" value="SerRS_1_N_sf"/>
</dbReference>
<dbReference type="InterPro" id="IPR033729">
    <property type="entry name" value="SerRS_core"/>
</dbReference>
<dbReference type="InterPro" id="IPR010978">
    <property type="entry name" value="tRNA-bd_arm"/>
</dbReference>
<dbReference type="NCBIfam" id="TIGR00414">
    <property type="entry name" value="serS"/>
    <property type="match status" value="1"/>
</dbReference>
<dbReference type="PANTHER" id="PTHR43697:SF1">
    <property type="entry name" value="SERINE--TRNA LIGASE"/>
    <property type="match status" value="1"/>
</dbReference>
<dbReference type="PANTHER" id="PTHR43697">
    <property type="entry name" value="SERYL-TRNA SYNTHETASE"/>
    <property type="match status" value="1"/>
</dbReference>
<dbReference type="Pfam" id="PF02403">
    <property type="entry name" value="Seryl_tRNA_N"/>
    <property type="match status" value="1"/>
</dbReference>
<dbReference type="Pfam" id="PF00587">
    <property type="entry name" value="tRNA-synt_2b"/>
    <property type="match status" value="1"/>
</dbReference>
<dbReference type="PIRSF" id="PIRSF001529">
    <property type="entry name" value="Ser-tRNA-synth_IIa"/>
    <property type="match status" value="1"/>
</dbReference>
<dbReference type="PRINTS" id="PR00981">
    <property type="entry name" value="TRNASYNTHSER"/>
</dbReference>
<dbReference type="SUPFAM" id="SSF55681">
    <property type="entry name" value="Class II aaRS and biotin synthetases"/>
    <property type="match status" value="1"/>
</dbReference>
<dbReference type="SUPFAM" id="SSF46589">
    <property type="entry name" value="tRNA-binding arm"/>
    <property type="match status" value="1"/>
</dbReference>
<dbReference type="PROSITE" id="PS50862">
    <property type="entry name" value="AA_TRNA_LIGASE_II"/>
    <property type="match status" value="1"/>
</dbReference>
<organism>
    <name type="scientific">Acaryochloris marina (strain MBIC 11017)</name>
    <dbReference type="NCBI Taxonomy" id="329726"/>
    <lineage>
        <taxon>Bacteria</taxon>
        <taxon>Bacillati</taxon>
        <taxon>Cyanobacteriota</taxon>
        <taxon>Cyanophyceae</taxon>
        <taxon>Acaryochloridales</taxon>
        <taxon>Acaryochloridaceae</taxon>
        <taxon>Acaryochloris</taxon>
    </lineage>
</organism>
<accession>B0BYR8</accession>
<gene>
    <name evidence="1" type="primary">serS</name>
    <name type="ordered locus">AM1_2069</name>
</gene>
<feature type="chain" id="PRO_1000077183" description="Serine--tRNA ligase">
    <location>
        <begin position="1"/>
        <end position="424"/>
    </location>
</feature>
<feature type="binding site" evidence="1">
    <location>
        <begin position="233"/>
        <end position="235"/>
    </location>
    <ligand>
        <name>L-serine</name>
        <dbReference type="ChEBI" id="CHEBI:33384"/>
    </ligand>
</feature>
<feature type="binding site" evidence="1">
    <location>
        <begin position="264"/>
        <end position="266"/>
    </location>
    <ligand>
        <name>ATP</name>
        <dbReference type="ChEBI" id="CHEBI:30616"/>
    </ligand>
</feature>
<feature type="binding site" evidence="1">
    <location>
        <position position="287"/>
    </location>
    <ligand>
        <name>L-serine</name>
        <dbReference type="ChEBI" id="CHEBI:33384"/>
    </ligand>
</feature>
<feature type="binding site" evidence="1">
    <location>
        <begin position="351"/>
        <end position="354"/>
    </location>
    <ligand>
        <name>ATP</name>
        <dbReference type="ChEBI" id="CHEBI:30616"/>
    </ligand>
</feature>
<feature type="binding site" evidence="1">
    <location>
        <position position="387"/>
    </location>
    <ligand>
        <name>L-serine</name>
        <dbReference type="ChEBI" id="CHEBI:33384"/>
    </ligand>
</feature>
<keyword id="KW-0030">Aminoacyl-tRNA synthetase</keyword>
<keyword id="KW-0067">ATP-binding</keyword>
<keyword id="KW-0963">Cytoplasm</keyword>
<keyword id="KW-0436">Ligase</keyword>
<keyword id="KW-0547">Nucleotide-binding</keyword>
<keyword id="KW-0648">Protein biosynthesis</keyword>
<keyword id="KW-1185">Reference proteome</keyword>